<proteinExistence type="inferred from homology"/>
<comment type="function">
    <text evidence="1">Component of a hydro-lyase that catalyzes the dehydration of mevalonate 5-phosphate (MVA5P) to form trans-anhydromevalonate 5-phosphate (tAHMP). Involved in the archaeal mevalonate (MVA) pathway, which provides fundamental precursors for isoprenoid biosynthesis, such as isopentenyl diphosphate (IPP) and dimethylallyl diphosphate (DMAPP).</text>
</comment>
<comment type="catalytic activity">
    <reaction evidence="1">
        <text>(R)-5-phosphomevalonate = (2E)-3-methyl-5-phosphooxypent-2-enoate + H2O</text>
        <dbReference type="Rhea" id="RHEA:78975"/>
        <dbReference type="ChEBI" id="CHEBI:15377"/>
        <dbReference type="ChEBI" id="CHEBI:58146"/>
        <dbReference type="ChEBI" id="CHEBI:229665"/>
        <dbReference type="EC" id="4.2.1.182"/>
    </reaction>
    <physiologicalReaction direction="left-to-right" evidence="1">
        <dbReference type="Rhea" id="RHEA:78976"/>
    </physiologicalReaction>
</comment>
<comment type="pathway">
    <text evidence="1">Isoprenoid biosynthesis; isopentenyl diphosphate biosynthesis via mevalonate pathway.</text>
</comment>
<comment type="subunit">
    <text evidence="1">Heterodimer composed of a large subunit (PMDh-L) and a small subunit (PMDh-S).</text>
</comment>
<comment type="similarity">
    <text evidence="1">Belongs to the AcnX type II small subunit family.</text>
</comment>
<sequence length="131" mass="13823">MEVDCRVISRGKGRGPVLVSTEPLSFLGGVDPGTGRVIDQKHPLHGRSIRGKVLLIPGGKGSTVGSYVIFQMAKNETAPAAIICLNAEPIIATGAIMAGIPMVDRPSEDLLGLLEDSMEVEVDADEGKIRF</sequence>
<name>PMDHS_METTH</name>
<evidence type="ECO:0000255" key="1">
    <source>
        <dbReference type="HAMAP-Rule" id="MF_00078"/>
    </source>
</evidence>
<organism>
    <name type="scientific">Methanothermobacter thermautotrophicus (strain ATCC 29096 / DSM 1053 / JCM 10044 / NBRC 100330 / Delta H)</name>
    <name type="common">Methanobacterium thermoautotrophicum</name>
    <dbReference type="NCBI Taxonomy" id="187420"/>
    <lineage>
        <taxon>Archaea</taxon>
        <taxon>Methanobacteriati</taxon>
        <taxon>Methanobacteriota</taxon>
        <taxon>Methanomada group</taxon>
        <taxon>Methanobacteria</taxon>
        <taxon>Methanobacteriales</taxon>
        <taxon>Methanobacteriaceae</taxon>
        <taxon>Methanothermobacter</taxon>
    </lineage>
</organism>
<feature type="chain" id="PRO_0000152568" description="Phosphomevalonate dehydratase small subunit">
    <location>
        <begin position="1"/>
        <end position="131"/>
    </location>
</feature>
<feature type="active site" description="Proton acceptor" evidence="1">
    <location>
        <position position="62"/>
    </location>
</feature>
<reference key="1">
    <citation type="journal article" date="1997" name="J. Bacteriol.">
        <title>Complete genome sequence of Methanobacterium thermoautotrophicum deltaH: functional analysis and comparative genomics.</title>
        <authorList>
            <person name="Smith D.R."/>
            <person name="Doucette-Stamm L.A."/>
            <person name="Deloughery C."/>
            <person name="Lee H.-M."/>
            <person name="Dubois J."/>
            <person name="Aldredge T."/>
            <person name="Bashirzadeh R."/>
            <person name="Blakely D."/>
            <person name="Cook R."/>
            <person name="Gilbert K."/>
            <person name="Harrison D."/>
            <person name="Hoang L."/>
            <person name="Keagle P."/>
            <person name="Lumm W."/>
            <person name="Pothier B."/>
            <person name="Qiu D."/>
            <person name="Spadafora R."/>
            <person name="Vicare R."/>
            <person name="Wang Y."/>
            <person name="Wierzbowski J."/>
            <person name="Gibson R."/>
            <person name="Jiwani N."/>
            <person name="Caruso A."/>
            <person name="Bush D."/>
            <person name="Safer H."/>
            <person name="Patwell D."/>
            <person name="Prabhakar S."/>
            <person name="McDougall S."/>
            <person name="Shimer G."/>
            <person name="Goyal A."/>
            <person name="Pietrovski S."/>
            <person name="Church G.M."/>
            <person name="Daniels C.J."/>
            <person name="Mao J.-I."/>
            <person name="Rice P."/>
            <person name="Noelling J."/>
            <person name="Reeve J.N."/>
        </authorList>
    </citation>
    <scope>NUCLEOTIDE SEQUENCE [LARGE SCALE GENOMIC DNA]</scope>
    <source>
        <strain>ATCC 29096 / DSM 1053 / JCM 10044 / NBRC 100330 / Delta H</strain>
    </source>
</reference>
<accession>O27573</accession>
<protein>
    <recommendedName>
        <fullName evidence="1">Phosphomevalonate dehydratase small subunit</fullName>
        <shortName evidence="1">PMDh small subunit</shortName>
        <shortName evidence="1">PMDh-S</shortName>
        <ecNumber evidence="1">4.2.1.182</ecNumber>
    </recommendedName>
</protein>
<gene>
    <name type="ordered locus">MTH_1530</name>
</gene>
<dbReference type="EC" id="4.2.1.182" evidence="1"/>
<dbReference type="EMBL" id="AE000666">
    <property type="protein sequence ID" value="AAB86004.1"/>
    <property type="molecule type" value="Genomic_DNA"/>
</dbReference>
<dbReference type="PIR" id="B69071">
    <property type="entry name" value="B69071"/>
</dbReference>
<dbReference type="RefSeq" id="WP_010877139.1">
    <property type="nucleotide sequence ID" value="NC_000916.1"/>
</dbReference>
<dbReference type="SMR" id="O27573"/>
<dbReference type="FunCoup" id="O27573">
    <property type="interactions" value="11"/>
</dbReference>
<dbReference type="STRING" id="187420.MTH_1530"/>
<dbReference type="PaxDb" id="187420-MTH_1530"/>
<dbReference type="EnsemblBacteria" id="AAB86004">
    <property type="protein sequence ID" value="AAB86004"/>
    <property type="gene ID" value="MTH_1530"/>
</dbReference>
<dbReference type="GeneID" id="1471799"/>
<dbReference type="KEGG" id="mth:MTH_1530"/>
<dbReference type="PATRIC" id="fig|187420.15.peg.1492"/>
<dbReference type="HOGENOM" id="CLU_141583_2_0_2"/>
<dbReference type="InParanoid" id="O27573"/>
<dbReference type="UniPathway" id="UPA00057"/>
<dbReference type="Proteomes" id="UP000005223">
    <property type="component" value="Chromosome"/>
</dbReference>
<dbReference type="GO" id="GO:0016836">
    <property type="term" value="F:hydro-lyase activity"/>
    <property type="evidence" value="ECO:0007669"/>
    <property type="project" value="UniProtKB-UniRule"/>
</dbReference>
<dbReference type="GO" id="GO:0019287">
    <property type="term" value="P:isopentenyl diphosphate biosynthetic process, mevalonate pathway"/>
    <property type="evidence" value="ECO:0007669"/>
    <property type="project" value="UniProtKB-UniRule"/>
</dbReference>
<dbReference type="CDD" id="cd01356">
    <property type="entry name" value="AcnX_swivel"/>
    <property type="match status" value="1"/>
</dbReference>
<dbReference type="Gene3D" id="3.50.30.10">
    <property type="entry name" value="Phosphohistidine domain"/>
    <property type="match status" value="1"/>
</dbReference>
<dbReference type="HAMAP" id="MF_00078">
    <property type="entry name" value="PMDh_S"/>
    <property type="match status" value="1"/>
</dbReference>
<dbReference type="InterPro" id="IPR012016">
    <property type="entry name" value="PMDh-S-like"/>
</dbReference>
<dbReference type="InterPro" id="IPR002840">
    <property type="entry name" value="PMDh-S-like_dom"/>
</dbReference>
<dbReference type="InterPro" id="IPR020794">
    <property type="entry name" value="PMDh_S"/>
</dbReference>
<dbReference type="NCBIfam" id="NF003046">
    <property type="entry name" value="PRK03955.1"/>
    <property type="match status" value="1"/>
</dbReference>
<dbReference type="PANTHER" id="PTHR36577">
    <property type="entry name" value="DUF521 DOMAIN PROTEIN (AFU_ORTHOLOGUE AFUA_6G00490)"/>
    <property type="match status" value="1"/>
</dbReference>
<dbReference type="PANTHER" id="PTHR36577:SF3">
    <property type="entry name" value="DUF521 DOMAIN PROTEIN (AFU_ORTHOLOGUE AFUA_6G00490)"/>
    <property type="match status" value="1"/>
</dbReference>
<dbReference type="Pfam" id="PF01989">
    <property type="entry name" value="AcnX_swivel_put"/>
    <property type="match status" value="1"/>
</dbReference>
<dbReference type="PIRSF" id="PIRSF004966">
    <property type="entry name" value="UCP004966"/>
    <property type="match status" value="1"/>
</dbReference>
<dbReference type="SUPFAM" id="SSF52016">
    <property type="entry name" value="LeuD/IlvD-like"/>
    <property type="match status" value="1"/>
</dbReference>
<keyword id="KW-0414">Isoprene biosynthesis</keyword>
<keyword id="KW-0456">Lyase</keyword>
<keyword id="KW-1185">Reference proteome</keyword>